<proteinExistence type="inferred from homology"/>
<evidence type="ECO:0000255" key="1">
    <source>
        <dbReference type="HAMAP-Rule" id="MF_00054"/>
    </source>
</evidence>
<protein>
    <recommendedName>
        <fullName evidence="1">Elongation factor G</fullName>
        <shortName evidence="1">EF-G</shortName>
    </recommendedName>
</protein>
<accession>Q5FUP6</accession>
<keyword id="KW-0963">Cytoplasm</keyword>
<keyword id="KW-0251">Elongation factor</keyword>
<keyword id="KW-0342">GTP-binding</keyword>
<keyword id="KW-0547">Nucleotide-binding</keyword>
<keyword id="KW-0648">Protein biosynthesis</keyword>
<keyword id="KW-1185">Reference proteome</keyword>
<gene>
    <name evidence="1" type="primary">fusA</name>
    <name type="ordered locus">GOX0105</name>
</gene>
<feature type="chain" id="PRO_0000091130" description="Elongation factor G">
    <location>
        <begin position="1"/>
        <end position="700"/>
    </location>
</feature>
<feature type="domain" description="tr-type G">
    <location>
        <begin position="13"/>
        <end position="288"/>
    </location>
</feature>
<feature type="binding site" evidence="1">
    <location>
        <begin position="22"/>
        <end position="29"/>
    </location>
    <ligand>
        <name>GTP</name>
        <dbReference type="ChEBI" id="CHEBI:37565"/>
    </ligand>
</feature>
<feature type="binding site" evidence="1">
    <location>
        <begin position="86"/>
        <end position="90"/>
    </location>
    <ligand>
        <name>GTP</name>
        <dbReference type="ChEBI" id="CHEBI:37565"/>
    </ligand>
</feature>
<feature type="binding site" evidence="1">
    <location>
        <begin position="140"/>
        <end position="143"/>
    </location>
    <ligand>
        <name>GTP</name>
        <dbReference type="ChEBI" id="CHEBI:37565"/>
    </ligand>
</feature>
<name>EFG_GLUOX</name>
<organism>
    <name type="scientific">Gluconobacter oxydans (strain 621H)</name>
    <name type="common">Gluconobacter suboxydans</name>
    <dbReference type="NCBI Taxonomy" id="290633"/>
    <lineage>
        <taxon>Bacteria</taxon>
        <taxon>Pseudomonadati</taxon>
        <taxon>Pseudomonadota</taxon>
        <taxon>Alphaproteobacteria</taxon>
        <taxon>Acetobacterales</taxon>
        <taxon>Acetobacteraceae</taxon>
        <taxon>Gluconobacter</taxon>
    </lineage>
</organism>
<dbReference type="EMBL" id="CP000009">
    <property type="protein sequence ID" value="AAW59900.1"/>
    <property type="molecule type" value="Genomic_DNA"/>
</dbReference>
<dbReference type="RefSeq" id="WP_011251704.1">
    <property type="nucleotide sequence ID" value="NC_006677.1"/>
</dbReference>
<dbReference type="SMR" id="Q5FUP6"/>
<dbReference type="STRING" id="290633.GOX0105"/>
<dbReference type="KEGG" id="gox:GOX0105"/>
<dbReference type="eggNOG" id="COG0480">
    <property type="taxonomic scope" value="Bacteria"/>
</dbReference>
<dbReference type="HOGENOM" id="CLU_002794_4_1_5"/>
<dbReference type="Proteomes" id="UP000006375">
    <property type="component" value="Chromosome"/>
</dbReference>
<dbReference type="GO" id="GO:0005737">
    <property type="term" value="C:cytoplasm"/>
    <property type="evidence" value="ECO:0007669"/>
    <property type="project" value="UniProtKB-SubCell"/>
</dbReference>
<dbReference type="GO" id="GO:0005525">
    <property type="term" value="F:GTP binding"/>
    <property type="evidence" value="ECO:0007669"/>
    <property type="project" value="UniProtKB-UniRule"/>
</dbReference>
<dbReference type="GO" id="GO:0003924">
    <property type="term" value="F:GTPase activity"/>
    <property type="evidence" value="ECO:0007669"/>
    <property type="project" value="InterPro"/>
</dbReference>
<dbReference type="GO" id="GO:0097216">
    <property type="term" value="F:guanosine tetraphosphate binding"/>
    <property type="evidence" value="ECO:0007669"/>
    <property type="project" value="UniProtKB-ARBA"/>
</dbReference>
<dbReference type="GO" id="GO:0003746">
    <property type="term" value="F:translation elongation factor activity"/>
    <property type="evidence" value="ECO:0007669"/>
    <property type="project" value="UniProtKB-UniRule"/>
</dbReference>
<dbReference type="GO" id="GO:0032790">
    <property type="term" value="P:ribosome disassembly"/>
    <property type="evidence" value="ECO:0007669"/>
    <property type="project" value="TreeGrafter"/>
</dbReference>
<dbReference type="CDD" id="cd01886">
    <property type="entry name" value="EF-G"/>
    <property type="match status" value="1"/>
</dbReference>
<dbReference type="CDD" id="cd16262">
    <property type="entry name" value="EFG_III"/>
    <property type="match status" value="1"/>
</dbReference>
<dbReference type="CDD" id="cd01434">
    <property type="entry name" value="EFG_mtEFG1_IV"/>
    <property type="match status" value="1"/>
</dbReference>
<dbReference type="CDD" id="cd03713">
    <property type="entry name" value="EFG_mtEFG_C"/>
    <property type="match status" value="1"/>
</dbReference>
<dbReference type="CDD" id="cd04088">
    <property type="entry name" value="EFG_mtEFG_II"/>
    <property type="match status" value="1"/>
</dbReference>
<dbReference type="FunFam" id="2.40.30.10:FF:000006">
    <property type="entry name" value="Elongation factor G"/>
    <property type="match status" value="1"/>
</dbReference>
<dbReference type="FunFam" id="3.30.230.10:FF:000003">
    <property type="entry name" value="Elongation factor G"/>
    <property type="match status" value="1"/>
</dbReference>
<dbReference type="FunFam" id="3.30.70.240:FF:000001">
    <property type="entry name" value="Elongation factor G"/>
    <property type="match status" value="1"/>
</dbReference>
<dbReference type="FunFam" id="3.30.70.870:FF:000001">
    <property type="entry name" value="Elongation factor G"/>
    <property type="match status" value="1"/>
</dbReference>
<dbReference type="FunFam" id="3.40.50.300:FF:000029">
    <property type="entry name" value="Elongation factor G"/>
    <property type="match status" value="1"/>
</dbReference>
<dbReference type="Gene3D" id="3.30.230.10">
    <property type="match status" value="1"/>
</dbReference>
<dbReference type="Gene3D" id="3.30.70.240">
    <property type="match status" value="1"/>
</dbReference>
<dbReference type="Gene3D" id="3.30.70.870">
    <property type="entry name" value="Elongation Factor G (Translational Gtpase), domain 3"/>
    <property type="match status" value="1"/>
</dbReference>
<dbReference type="Gene3D" id="3.40.50.300">
    <property type="entry name" value="P-loop containing nucleotide triphosphate hydrolases"/>
    <property type="match status" value="1"/>
</dbReference>
<dbReference type="Gene3D" id="2.40.30.10">
    <property type="entry name" value="Translation factors"/>
    <property type="match status" value="1"/>
</dbReference>
<dbReference type="HAMAP" id="MF_00054_B">
    <property type="entry name" value="EF_G_EF_2_B"/>
    <property type="match status" value="1"/>
</dbReference>
<dbReference type="InterPro" id="IPR041095">
    <property type="entry name" value="EFG_II"/>
</dbReference>
<dbReference type="InterPro" id="IPR009022">
    <property type="entry name" value="EFG_III"/>
</dbReference>
<dbReference type="InterPro" id="IPR035647">
    <property type="entry name" value="EFG_III/V"/>
</dbReference>
<dbReference type="InterPro" id="IPR047872">
    <property type="entry name" value="EFG_IV"/>
</dbReference>
<dbReference type="InterPro" id="IPR035649">
    <property type="entry name" value="EFG_V"/>
</dbReference>
<dbReference type="InterPro" id="IPR000640">
    <property type="entry name" value="EFG_V-like"/>
</dbReference>
<dbReference type="InterPro" id="IPR004161">
    <property type="entry name" value="EFTu-like_2"/>
</dbReference>
<dbReference type="InterPro" id="IPR031157">
    <property type="entry name" value="G_TR_CS"/>
</dbReference>
<dbReference type="InterPro" id="IPR027417">
    <property type="entry name" value="P-loop_NTPase"/>
</dbReference>
<dbReference type="InterPro" id="IPR020568">
    <property type="entry name" value="Ribosomal_Su5_D2-typ_SF"/>
</dbReference>
<dbReference type="InterPro" id="IPR014721">
    <property type="entry name" value="Ribsml_uS5_D2-typ_fold_subgr"/>
</dbReference>
<dbReference type="InterPro" id="IPR005225">
    <property type="entry name" value="Small_GTP-bd"/>
</dbReference>
<dbReference type="InterPro" id="IPR000795">
    <property type="entry name" value="T_Tr_GTP-bd_dom"/>
</dbReference>
<dbReference type="InterPro" id="IPR009000">
    <property type="entry name" value="Transl_B-barrel_sf"/>
</dbReference>
<dbReference type="InterPro" id="IPR004540">
    <property type="entry name" value="Transl_elong_EFG/EF2"/>
</dbReference>
<dbReference type="InterPro" id="IPR005517">
    <property type="entry name" value="Transl_elong_EFG/EF2_IV"/>
</dbReference>
<dbReference type="NCBIfam" id="TIGR00484">
    <property type="entry name" value="EF-G"/>
    <property type="match status" value="1"/>
</dbReference>
<dbReference type="NCBIfam" id="NF009381">
    <property type="entry name" value="PRK12740.1-5"/>
    <property type="match status" value="1"/>
</dbReference>
<dbReference type="NCBIfam" id="TIGR00231">
    <property type="entry name" value="small_GTP"/>
    <property type="match status" value="1"/>
</dbReference>
<dbReference type="PANTHER" id="PTHR43261:SF1">
    <property type="entry name" value="RIBOSOME-RELEASING FACTOR 2, MITOCHONDRIAL"/>
    <property type="match status" value="1"/>
</dbReference>
<dbReference type="PANTHER" id="PTHR43261">
    <property type="entry name" value="TRANSLATION ELONGATION FACTOR G-RELATED"/>
    <property type="match status" value="1"/>
</dbReference>
<dbReference type="Pfam" id="PF00679">
    <property type="entry name" value="EFG_C"/>
    <property type="match status" value="1"/>
</dbReference>
<dbReference type="Pfam" id="PF14492">
    <property type="entry name" value="EFG_III"/>
    <property type="match status" value="1"/>
</dbReference>
<dbReference type="Pfam" id="PF03764">
    <property type="entry name" value="EFG_IV"/>
    <property type="match status" value="1"/>
</dbReference>
<dbReference type="Pfam" id="PF00009">
    <property type="entry name" value="GTP_EFTU"/>
    <property type="match status" value="1"/>
</dbReference>
<dbReference type="Pfam" id="PF03144">
    <property type="entry name" value="GTP_EFTU_D2"/>
    <property type="match status" value="1"/>
</dbReference>
<dbReference type="PRINTS" id="PR00315">
    <property type="entry name" value="ELONGATNFCT"/>
</dbReference>
<dbReference type="SMART" id="SM00838">
    <property type="entry name" value="EFG_C"/>
    <property type="match status" value="1"/>
</dbReference>
<dbReference type="SMART" id="SM00889">
    <property type="entry name" value="EFG_IV"/>
    <property type="match status" value="1"/>
</dbReference>
<dbReference type="SUPFAM" id="SSF54980">
    <property type="entry name" value="EF-G C-terminal domain-like"/>
    <property type="match status" value="2"/>
</dbReference>
<dbReference type="SUPFAM" id="SSF52540">
    <property type="entry name" value="P-loop containing nucleoside triphosphate hydrolases"/>
    <property type="match status" value="1"/>
</dbReference>
<dbReference type="SUPFAM" id="SSF54211">
    <property type="entry name" value="Ribosomal protein S5 domain 2-like"/>
    <property type="match status" value="1"/>
</dbReference>
<dbReference type="SUPFAM" id="SSF50447">
    <property type="entry name" value="Translation proteins"/>
    <property type="match status" value="1"/>
</dbReference>
<dbReference type="PROSITE" id="PS00301">
    <property type="entry name" value="G_TR_1"/>
    <property type="match status" value="1"/>
</dbReference>
<dbReference type="PROSITE" id="PS51722">
    <property type="entry name" value="G_TR_2"/>
    <property type="match status" value="1"/>
</dbReference>
<sequence>MSESVQEAKSALSKIRNIGITAHIDAGKTTTTERILYYTGVSHKIGEVHEGNTTTDYMAQERERGITITSAAVTCEWNDHRINIIDTPGHIDFNIEVNRSLRVLDGAIFVIEGVAGVQPQSETNWRLADRYNVPRIIFINKLDRTGADFYYAFSTLKEKLDIVAVPLQLPIGAEENFIGVVDLVEMRAIVWEGGELGAKFHYEEIPDDLKEKAAEARQTLLDTALAMDDAAMEEYFEKGDVDVAILKKCIKKGAISGEFRPVMCGTAFKNKGVQPLLDAVIDYLPAPDEVEGIRIAPPEGEEVDEDFLPIVPVDPDGKFAGLAFKIISDKYGTLTFVRVYRGVLNSGDTILNTTKGHKERVGRMFQMHADKRQEVKSVGAGDIAAFVGLKDTVTGDTLADAADPVVLERMQFPVPVIDISVEPKTKDAVEKMTLALQKLTAEDPSLHLKTDQETGQTILSGMGELHLDIIVDRLRREYGVDANIGAPQVAYRETITKPHVETYTHKKQSGGSGQFAEVKIEFAPSEKPDEIIFENKVVGGTVPKEYIPAVEKGIRMQSTTGVLAGFPTVDFKFTLLDGKYHDVDSSALAFEIAAKACFREGMKNAGPVILEPIMDVEITTPNDHVGDVVGDLNRRRGIIQNQETAGSTVMIRAQVPLKEMFGYISHLRSATKGRASFTMQFHHYDPVPRNVAEEIIAKSA</sequence>
<comment type="function">
    <text evidence="1">Catalyzes the GTP-dependent ribosomal translocation step during translation elongation. During this step, the ribosome changes from the pre-translocational (PRE) to the post-translocational (POST) state as the newly formed A-site-bound peptidyl-tRNA and P-site-bound deacylated tRNA move to the P and E sites, respectively. Catalyzes the coordinated movement of the two tRNA molecules, the mRNA and conformational changes in the ribosome.</text>
</comment>
<comment type="subcellular location">
    <subcellularLocation>
        <location evidence="1">Cytoplasm</location>
    </subcellularLocation>
</comment>
<comment type="similarity">
    <text evidence="1">Belongs to the TRAFAC class translation factor GTPase superfamily. Classic translation factor GTPase family. EF-G/EF-2 subfamily.</text>
</comment>
<reference key="1">
    <citation type="journal article" date="2005" name="Nat. Biotechnol.">
        <title>Complete genome sequence of the acetic acid bacterium Gluconobacter oxydans.</title>
        <authorList>
            <person name="Prust C."/>
            <person name="Hoffmeister M."/>
            <person name="Liesegang H."/>
            <person name="Wiezer A."/>
            <person name="Fricke W.F."/>
            <person name="Ehrenreich A."/>
            <person name="Gottschalk G."/>
            <person name="Deppenmeier U."/>
        </authorList>
    </citation>
    <scope>NUCLEOTIDE SEQUENCE [LARGE SCALE GENOMIC DNA]</scope>
    <source>
        <strain>621H</strain>
    </source>
</reference>